<reference key="1">
    <citation type="journal article" date="1997" name="Nature">
        <title>The nucleotide sequence of Saccharomyces cerevisiae chromosome XVI.</title>
        <authorList>
            <person name="Bussey H."/>
            <person name="Storms R.K."/>
            <person name="Ahmed A."/>
            <person name="Albermann K."/>
            <person name="Allen E."/>
            <person name="Ansorge W."/>
            <person name="Araujo R."/>
            <person name="Aparicio A."/>
            <person name="Barrell B.G."/>
            <person name="Badcock K."/>
            <person name="Benes V."/>
            <person name="Botstein D."/>
            <person name="Bowman S."/>
            <person name="Brueckner M."/>
            <person name="Carpenter J."/>
            <person name="Cherry J.M."/>
            <person name="Chung E."/>
            <person name="Churcher C.M."/>
            <person name="Coster F."/>
            <person name="Davis K."/>
            <person name="Davis R.W."/>
            <person name="Dietrich F.S."/>
            <person name="Delius H."/>
            <person name="DiPaolo T."/>
            <person name="Dubois E."/>
            <person name="Duesterhoeft A."/>
            <person name="Duncan M."/>
            <person name="Floeth M."/>
            <person name="Fortin N."/>
            <person name="Friesen J.D."/>
            <person name="Fritz C."/>
            <person name="Goffeau A."/>
            <person name="Hall J."/>
            <person name="Hebling U."/>
            <person name="Heumann K."/>
            <person name="Hilbert H."/>
            <person name="Hillier L.W."/>
            <person name="Hunicke-Smith S."/>
            <person name="Hyman R.W."/>
            <person name="Johnston M."/>
            <person name="Kalman S."/>
            <person name="Kleine K."/>
            <person name="Komp C."/>
            <person name="Kurdi O."/>
            <person name="Lashkari D."/>
            <person name="Lew H."/>
            <person name="Lin A."/>
            <person name="Lin D."/>
            <person name="Louis E.J."/>
            <person name="Marathe R."/>
            <person name="Messenguy F."/>
            <person name="Mewes H.-W."/>
            <person name="Mirtipati S."/>
            <person name="Moestl D."/>
            <person name="Mueller-Auer S."/>
            <person name="Namath A."/>
            <person name="Nentwich U."/>
            <person name="Oefner P."/>
            <person name="Pearson D."/>
            <person name="Petel F.X."/>
            <person name="Pohl T.M."/>
            <person name="Purnelle B."/>
            <person name="Rajandream M.A."/>
            <person name="Rechmann S."/>
            <person name="Rieger M."/>
            <person name="Riles L."/>
            <person name="Roberts D."/>
            <person name="Schaefer M."/>
            <person name="Scharfe M."/>
            <person name="Scherens B."/>
            <person name="Schramm S."/>
            <person name="Schroeder M."/>
            <person name="Sdicu A.-M."/>
            <person name="Tettelin H."/>
            <person name="Urrestarazu L.A."/>
            <person name="Ushinsky S."/>
            <person name="Vierendeels F."/>
            <person name="Vissers S."/>
            <person name="Voss H."/>
            <person name="Walsh S.V."/>
            <person name="Wambutt R."/>
            <person name="Wang Y."/>
            <person name="Wedler E."/>
            <person name="Wedler H."/>
            <person name="Winnett E."/>
            <person name="Zhong W.-W."/>
            <person name="Zollner A."/>
            <person name="Vo D.H."/>
            <person name="Hani J."/>
        </authorList>
    </citation>
    <scope>NUCLEOTIDE SEQUENCE [LARGE SCALE GENOMIC DNA]</scope>
    <source>
        <strain>ATCC 204508 / S288c</strain>
    </source>
</reference>
<reference key="2">
    <citation type="journal article" date="2014" name="G3 (Bethesda)">
        <title>The reference genome sequence of Saccharomyces cerevisiae: Then and now.</title>
        <authorList>
            <person name="Engel S.R."/>
            <person name="Dietrich F.S."/>
            <person name="Fisk D.G."/>
            <person name="Binkley G."/>
            <person name="Balakrishnan R."/>
            <person name="Costanzo M.C."/>
            <person name="Dwight S.S."/>
            <person name="Hitz B.C."/>
            <person name="Karra K."/>
            <person name="Nash R.S."/>
            <person name="Weng S."/>
            <person name="Wong E.D."/>
            <person name="Lloyd P."/>
            <person name="Skrzypek M.S."/>
            <person name="Miyasato S.R."/>
            <person name="Simison M."/>
            <person name="Cherry J.M."/>
        </authorList>
    </citation>
    <scope>GENOME REANNOTATION</scope>
    <source>
        <strain>ATCC 204508 / S288c</strain>
    </source>
</reference>
<reference key="3">
    <citation type="journal article" date="2000" name="Nat. Genet.">
        <title>Analysis of yeast protein kinases using protein chips.</title>
        <authorList>
            <person name="Zhu H."/>
            <person name="Klemic J.F."/>
            <person name="Chang S."/>
            <person name="Bertone P."/>
            <person name="Casamayor A."/>
            <person name="Klemic K.G."/>
            <person name="Smith D."/>
            <person name="Gerstein M."/>
            <person name="Reed M.A."/>
            <person name="Snyder M."/>
        </authorList>
    </citation>
    <scope>FUNCTION</scope>
</reference>
<reference key="4">
    <citation type="journal article" date="2003" name="Nature">
        <title>Global analysis of protein localization in budding yeast.</title>
        <authorList>
            <person name="Huh W.-K."/>
            <person name="Falvo J.V."/>
            <person name="Gerke L.C."/>
            <person name="Carroll A.S."/>
            <person name="Howson R.W."/>
            <person name="Weissman J.S."/>
            <person name="O'Shea E.K."/>
        </authorList>
    </citation>
    <scope>SUBCELLULAR LOCATION [LARGE SCALE ANALYSIS]</scope>
</reference>
<reference key="5">
    <citation type="journal article" date="2006" name="Cell">
        <title>Global analysis of protein palmitoylation in yeast.</title>
        <authorList>
            <person name="Roth A.F."/>
            <person name="Wan J."/>
            <person name="Bailey A.O."/>
            <person name="Sun B."/>
            <person name="Kuchar J.A."/>
            <person name="Green W.N."/>
            <person name="Phinney B.S."/>
            <person name="Yates J.R. III"/>
            <person name="Davis N.G."/>
        </authorList>
    </citation>
    <scope>PALMITOYLATION AT CYS-13; CYS-14 AND CYS-15</scope>
</reference>
<reference key="6">
    <citation type="journal article" date="2008" name="Mol. Cell. Proteomics">
        <title>A multidimensional chromatography technology for in-depth phosphoproteome analysis.</title>
        <authorList>
            <person name="Albuquerque C.P."/>
            <person name="Smolka M.B."/>
            <person name="Payne S.H."/>
            <person name="Bafna V."/>
            <person name="Eng J."/>
            <person name="Zhou H."/>
        </authorList>
    </citation>
    <scope>IDENTIFICATION BY MASS SPECTROMETRY [LARGE SCALE ANALYSIS]</scope>
</reference>
<reference key="7">
    <citation type="journal article" date="2011" name="PLoS ONE">
        <title>A genome-wide immunodetection screen in S. cerevisiae uncovers novel genes involved in lysosomal vacuole function and morphology.</title>
        <authorList>
            <person name="Ricarte F."/>
            <person name="Menjivar R."/>
            <person name="Chhun S."/>
            <person name="Soreta T."/>
            <person name="Oliveira L."/>
            <person name="Hsueh T."/>
            <person name="Serranilla M."/>
            <person name="Gharakhanian E."/>
        </authorList>
    </citation>
    <scope>DISRUPTION PHENOTYPE</scope>
    <scope>FUNCTION</scope>
</reference>
<sequence>MISIVLELFQNLCCCRGFSDATIRVNDKRYRIQRLLGEGGMSFVYLVQLSKNSLIIDNGIATPELYALKKIICPSVESISNGMREIENYKRFQSPYVIKSIDSQVMQEKDGSKTIYIVLPYYSLGSLQDSINRRLLEGTFVSEAECVRIMLGVTRGLLCLHDPASRQDNATSRVNVDAVSMTYSDETAMLLEDTPLEMDMLSSNSAGSIAYAHRDITPSNILFSSDGLPVIGDLGSCSQADITIENRHQLSELQEWVNDNCTLPYTPPELLNLKLNQVLSSKVDIWSLGCTFYTLMFGISPFEREEQIHGASLTYAINTGKYSFPRNSRFSEGLLSVIKKCIQVDPIQRPTTSQLLNLLQDLDT</sequence>
<accession>Q12003</accession>
<accession>D6W3D4</accession>
<accession>Q7LGU7</accession>
<keyword id="KW-0067">ATP-binding</keyword>
<keyword id="KW-0418">Kinase</keyword>
<keyword id="KW-0449">Lipoprotein</keyword>
<keyword id="KW-0472">Membrane</keyword>
<keyword id="KW-0547">Nucleotide-binding</keyword>
<keyword id="KW-0564">Palmitate</keyword>
<keyword id="KW-1185">Reference proteome</keyword>
<keyword id="KW-0723">Serine/threonine-protein kinase</keyword>
<keyword id="KW-0808">Transferase</keyword>
<keyword id="KW-0926">Vacuole</keyword>
<name>ENV7_YEAST</name>
<proteinExistence type="evidence at protein level"/>
<feature type="chain" id="PRO_0000255977" description="Serine/threonine-protein kinase ENV7">
    <location>
        <begin position="1"/>
        <end position="364"/>
    </location>
</feature>
<feature type="domain" description="Protein kinase" evidence="1">
    <location>
        <begin position="30"/>
        <end position="364"/>
    </location>
</feature>
<feature type="active site" description="Proton acceptor" evidence="1">
    <location>
        <position position="215"/>
    </location>
</feature>
<feature type="binding site" evidence="1">
    <location>
        <begin position="36"/>
        <end position="44"/>
    </location>
    <ligand>
        <name>ATP</name>
        <dbReference type="ChEBI" id="CHEBI:30616"/>
    </ligand>
</feature>
<feature type="binding site" evidence="1">
    <location>
        <position position="69"/>
    </location>
    <ligand>
        <name>ATP</name>
        <dbReference type="ChEBI" id="CHEBI:30616"/>
    </ligand>
</feature>
<feature type="lipid moiety-binding region" description="S-palmitoyl cysteine" evidence="5">
    <location>
        <position position="13"/>
    </location>
</feature>
<feature type="lipid moiety-binding region" description="S-palmitoyl cysteine" evidence="5">
    <location>
        <position position="14"/>
    </location>
</feature>
<feature type="lipid moiety-binding region" description="S-palmitoyl cysteine" evidence="5">
    <location>
        <position position="15"/>
    </location>
</feature>
<protein>
    <recommendedName>
        <fullName>Serine/threonine-protein kinase ENV7</fullName>
        <ecNumber>2.7.11.1</ecNumber>
    </recommendedName>
    <alternativeName>
        <fullName>Late endosome and vacuole interface protein 7</fullName>
    </alternativeName>
</protein>
<gene>
    <name type="primary">ENV7</name>
    <name type="ordered locus">YPL236C</name>
</gene>
<evidence type="ECO:0000255" key="1">
    <source>
        <dbReference type="PROSITE-ProRule" id="PRU00159"/>
    </source>
</evidence>
<evidence type="ECO:0000269" key="2">
    <source>
    </source>
</evidence>
<evidence type="ECO:0000269" key="3">
    <source>
    </source>
</evidence>
<evidence type="ECO:0000269" key="4">
    <source>
    </source>
</evidence>
<evidence type="ECO:0000305" key="5">
    <source>
    </source>
</evidence>
<dbReference type="EC" id="2.7.11.1"/>
<dbReference type="EMBL" id="Z67751">
    <property type="protein sequence ID" value="CAA91608.1"/>
    <property type="molecule type" value="Genomic_DNA"/>
</dbReference>
<dbReference type="EMBL" id="Z73591">
    <property type="protein sequence ID" value="CAA97953.1"/>
    <property type="molecule type" value="Genomic_DNA"/>
</dbReference>
<dbReference type="EMBL" id="Z73592">
    <property type="protein sequence ID" value="CAA97954.1"/>
    <property type="molecule type" value="Genomic_DNA"/>
</dbReference>
<dbReference type="EMBL" id="BK006949">
    <property type="protein sequence ID" value="DAA11200.1"/>
    <property type="molecule type" value="Genomic_DNA"/>
</dbReference>
<dbReference type="PIR" id="S61028">
    <property type="entry name" value="S61028"/>
</dbReference>
<dbReference type="RefSeq" id="NP_015088.1">
    <property type="nucleotide sequence ID" value="NM_001184050.1"/>
</dbReference>
<dbReference type="SMR" id="Q12003"/>
<dbReference type="BioGRID" id="35926">
    <property type="interactions" value="79"/>
</dbReference>
<dbReference type="DIP" id="DIP-6626N"/>
<dbReference type="FunCoup" id="Q12003">
    <property type="interactions" value="937"/>
</dbReference>
<dbReference type="IntAct" id="Q12003">
    <property type="interactions" value="5"/>
</dbReference>
<dbReference type="STRING" id="4932.YPL236C"/>
<dbReference type="iPTMnet" id="Q12003"/>
<dbReference type="SwissPalm" id="Q12003"/>
<dbReference type="PaxDb" id="4932-YPL236C"/>
<dbReference type="PeptideAtlas" id="Q12003"/>
<dbReference type="EnsemblFungi" id="YPL236C_mRNA">
    <property type="protein sequence ID" value="YPL236C"/>
    <property type="gene ID" value="YPL236C"/>
</dbReference>
<dbReference type="GeneID" id="855840"/>
<dbReference type="KEGG" id="sce:YPL236C"/>
<dbReference type="AGR" id="SGD:S000006157"/>
<dbReference type="SGD" id="S000006157">
    <property type="gene designation" value="ENV7"/>
</dbReference>
<dbReference type="VEuPathDB" id="FungiDB:YPL236C"/>
<dbReference type="eggNOG" id="KOG2345">
    <property type="taxonomic scope" value="Eukaryota"/>
</dbReference>
<dbReference type="GeneTree" id="ENSGT00550000075037"/>
<dbReference type="HOGENOM" id="CLU_000288_109_1_1"/>
<dbReference type="InParanoid" id="Q12003"/>
<dbReference type="OMA" id="AMHQYKV"/>
<dbReference type="OrthoDB" id="248923at2759"/>
<dbReference type="BioCyc" id="YEAST:G3O-34123-MONOMER"/>
<dbReference type="BioGRID-ORCS" id="855840">
    <property type="hits" value="0 hits in 10 CRISPR screens"/>
</dbReference>
<dbReference type="PRO" id="PR:Q12003"/>
<dbReference type="Proteomes" id="UP000002311">
    <property type="component" value="Chromosome XVI"/>
</dbReference>
<dbReference type="RNAct" id="Q12003">
    <property type="molecule type" value="protein"/>
</dbReference>
<dbReference type="GO" id="GO:0005737">
    <property type="term" value="C:cytoplasm"/>
    <property type="evidence" value="ECO:0000318"/>
    <property type="project" value="GO_Central"/>
</dbReference>
<dbReference type="GO" id="GO:0000329">
    <property type="term" value="C:fungal-type vacuole membrane"/>
    <property type="evidence" value="ECO:0007005"/>
    <property type="project" value="SGD"/>
</dbReference>
<dbReference type="GO" id="GO:0005794">
    <property type="term" value="C:Golgi apparatus"/>
    <property type="evidence" value="ECO:0000318"/>
    <property type="project" value="GO_Central"/>
</dbReference>
<dbReference type="GO" id="GO:0005524">
    <property type="term" value="F:ATP binding"/>
    <property type="evidence" value="ECO:0007669"/>
    <property type="project" value="UniProtKB-KW"/>
</dbReference>
<dbReference type="GO" id="GO:0106310">
    <property type="term" value="F:protein serine kinase activity"/>
    <property type="evidence" value="ECO:0007669"/>
    <property type="project" value="RHEA"/>
</dbReference>
<dbReference type="GO" id="GO:0004674">
    <property type="term" value="F:protein serine/threonine kinase activity"/>
    <property type="evidence" value="ECO:0000250"/>
    <property type="project" value="SGD"/>
</dbReference>
<dbReference type="GO" id="GO:0032889">
    <property type="term" value="P:regulation of vacuole fusion, non-autophagic"/>
    <property type="evidence" value="ECO:0000315"/>
    <property type="project" value="SGD"/>
</dbReference>
<dbReference type="GO" id="GO:0006624">
    <property type="term" value="P:vacuolar protein processing"/>
    <property type="evidence" value="ECO:0000315"/>
    <property type="project" value="SGD"/>
</dbReference>
<dbReference type="CDD" id="cd13986">
    <property type="entry name" value="STKc_16"/>
    <property type="match status" value="1"/>
</dbReference>
<dbReference type="FunFam" id="1.10.510.10:FF:000860">
    <property type="entry name" value="Serine/threonine-protein kinase ENV7"/>
    <property type="match status" value="1"/>
</dbReference>
<dbReference type="FunFam" id="1.10.510.10:FF:001049">
    <property type="entry name" value="YPL236C-like protein"/>
    <property type="match status" value="1"/>
</dbReference>
<dbReference type="Gene3D" id="1.10.510.10">
    <property type="entry name" value="Transferase(Phosphotransferase) domain 1"/>
    <property type="match status" value="2"/>
</dbReference>
<dbReference type="InterPro" id="IPR011009">
    <property type="entry name" value="Kinase-like_dom_sf"/>
</dbReference>
<dbReference type="InterPro" id="IPR000719">
    <property type="entry name" value="Prot_kinase_dom"/>
</dbReference>
<dbReference type="InterPro" id="IPR017441">
    <property type="entry name" value="Protein_kinase_ATP_BS"/>
</dbReference>
<dbReference type="InterPro" id="IPR052239">
    <property type="entry name" value="Ser/Thr-specific_kinases"/>
</dbReference>
<dbReference type="PANTHER" id="PTHR45998">
    <property type="entry name" value="SERINE/THREONINE-PROTEIN KINASE 16"/>
    <property type="match status" value="1"/>
</dbReference>
<dbReference type="PANTHER" id="PTHR45998:SF2">
    <property type="entry name" value="SERINE_THREONINE-PROTEIN KINASE 16"/>
    <property type="match status" value="1"/>
</dbReference>
<dbReference type="Pfam" id="PF00069">
    <property type="entry name" value="Pkinase"/>
    <property type="match status" value="2"/>
</dbReference>
<dbReference type="SUPFAM" id="SSF56112">
    <property type="entry name" value="Protein kinase-like (PK-like)"/>
    <property type="match status" value="1"/>
</dbReference>
<dbReference type="PROSITE" id="PS00107">
    <property type="entry name" value="PROTEIN_KINASE_ATP"/>
    <property type="match status" value="1"/>
</dbReference>
<dbReference type="PROSITE" id="PS50011">
    <property type="entry name" value="PROTEIN_KINASE_DOM"/>
    <property type="match status" value="1"/>
</dbReference>
<comment type="function">
    <text evidence="2 4">Serine/threonine-protein kinase involved in vacuolar processing and morphology.</text>
</comment>
<comment type="catalytic activity">
    <reaction>
        <text>L-seryl-[protein] + ATP = O-phospho-L-seryl-[protein] + ADP + H(+)</text>
        <dbReference type="Rhea" id="RHEA:17989"/>
        <dbReference type="Rhea" id="RHEA-COMP:9863"/>
        <dbReference type="Rhea" id="RHEA-COMP:11604"/>
        <dbReference type="ChEBI" id="CHEBI:15378"/>
        <dbReference type="ChEBI" id="CHEBI:29999"/>
        <dbReference type="ChEBI" id="CHEBI:30616"/>
        <dbReference type="ChEBI" id="CHEBI:83421"/>
        <dbReference type="ChEBI" id="CHEBI:456216"/>
        <dbReference type="EC" id="2.7.11.1"/>
    </reaction>
</comment>
<comment type="catalytic activity">
    <reaction>
        <text>L-threonyl-[protein] + ATP = O-phospho-L-threonyl-[protein] + ADP + H(+)</text>
        <dbReference type="Rhea" id="RHEA:46608"/>
        <dbReference type="Rhea" id="RHEA-COMP:11060"/>
        <dbReference type="Rhea" id="RHEA-COMP:11605"/>
        <dbReference type="ChEBI" id="CHEBI:15378"/>
        <dbReference type="ChEBI" id="CHEBI:30013"/>
        <dbReference type="ChEBI" id="CHEBI:30616"/>
        <dbReference type="ChEBI" id="CHEBI:61977"/>
        <dbReference type="ChEBI" id="CHEBI:456216"/>
        <dbReference type="EC" id="2.7.11.1"/>
    </reaction>
</comment>
<comment type="subcellular location">
    <subcellularLocation>
        <location evidence="3">Vacuole membrane</location>
        <topology evidence="3">Peripheral membrane protein</topology>
    </subcellularLocation>
</comment>
<comment type="disruption phenotype">
    <text evidence="4">Leads to internal accumulation of precursor CPY.</text>
</comment>
<comment type="similarity">
    <text evidence="1">Belongs to the protein kinase superfamily. Ser/Thr protein kinase family.</text>
</comment>
<organism>
    <name type="scientific">Saccharomyces cerevisiae (strain ATCC 204508 / S288c)</name>
    <name type="common">Baker's yeast</name>
    <dbReference type="NCBI Taxonomy" id="559292"/>
    <lineage>
        <taxon>Eukaryota</taxon>
        <taxon>Fungi</taxon>
        <taxon>Dikarya</taxon>
        <taxon>Ascomycota</taxon>
        <taxon>Saccharomycotina</taxon>
        <taxon>Saccharomycetes</taxon>
        <taxon>Saccharomycetales</taxon>
        <taxon>Saccharomycetaceae</taxon>
        <taxon>Saccharomyces</taxon>
    </lineage>
</organism>